<proteinExistence type="inferred from homology"/>
<reference key="1">
    <citation type="journal article" date="2004" name="Nucleic Acids Res.">
        <title>Thermoadaptation trait revealed by the genome sequence of thermophilic Geobacillus kaustophilus.</title>
        <authorList>
            <person name="Takami H."/>
            <person name="Takaki Y."/>
            <person name="Chee G.-J."/>
            <person name="Nishi S."/>
            <person name="Shimamura S."/>
            <person name="Suzuki H."/>
            <person name="Matsui S."/>
            <person name="Uchiyama I."/>
        </authorList>
    </citation>
    <scope>NUCLEOTIDE SEQUENCE [LARGE SCALE GENOMIC DNA]</scope>
    <source>
        <strain>HTA426</strain>
    </source>
</reference>
<feature type="chain" id="PRO_0000237728" description="2-C-methyl-D-erythritol 2,4-cyclodiphosphate synthase">
    <location>
        <begin position="1"/>
        <end position="158"/>
    </location>
</feature>
<feature type="binding site" evidence="1">
    <location>
        <begin position="9"/>
        <end position="11"/>
    </location>
    <ligand>
        <name>4-CDP-2-C-methyl-D-erythritol 2-phosphate</name>
        <dbReference type="ChEBI" id="CHEBI:57919"/>
    </ligand>
</feature>
<feature type="binding site" evidence="1">
    <location>
        <position position="9"/>
    </location>
    <ligand>
        <name>a divalent metal cation</name>
        <dbReference type="ChEBI" id="CHEBI:60240"/>
    </ligand>
</feature>
<feature type="binding site" evidence="1">
    <location>
        <position position="11"/>
    </location>
    <ligand>
        <name>a divalent metal cation</name>
        <dbReference type="ChEBI" id="CHEBI:60240"/>
    </ligand>
</feature>
<feature type="binding site" evidence="1">
    <location>
        <begin position="35"/>
        <end position="36"/>
    </location>
    <ligand>
        <name>4-CDP-2-C-methyl-D-erythritol 2-phosphate</name>
        <dbReference type="ChEBI" id="CHEBI:57919"/>
    </ligand>
</feature>
<feature type="binding site" evidence="1">
    <location>
        <position position="43"/>
    </location>
    <ligand>
        <name>a divalent metal cation</name>
        <dbReference type="ChEBI" id="CHEBI:60240"/>
    </ligand>
</feature>
<feature type="binding site" evidence="1">
    <location>
        <begin position="57"/>
        <end position="59"/>
    </location>
    <ligand>
        <name>4-CDP-2-C-methyl-D-erythritol 2-phosphate</name>
        <dbReference type="ChEBI" id="CHEBI:57919"/>
    </ligand>
</feature>
<feature type="binding site" evidence="1">
    <location>
        <begin position="62"/>
        <end position="66"/>
    </location>
    <ligand>
        <name>4-CDP-2-C-methyl-D-erythritol 2-phosphate</name>
        <dbReference type="ChEBI" id="CHEBI:57919"/>
    </ligand>
</feature>
<feature type="binding site" evidence="1">
    <location>
        <begin position="133"/>
        <end position="136"/>
    </location>
    <ligand>
        <name>4-CDP-2-C-methyl-D-erythritol 2-phosphate</name>
        <dbReference type="ChEBI" id="CHEBI:57919"/>
    </ligand>
</feature>
<feature type="binding site" evidence="1">
    <location>
        <position position="140"/>
    </location>
    <ligand>
        <name>4-CDP-2-C-methyl-D-erythritol 2-phosphate</name>
        <dbReference type="ChEBI" id="CHEBI:57919"/>
    </ligand>
</feature>
<feature type="binding site" evidence="1">
    <location>
        <position position="143"/>
    </location>
    <ligand>
        <name>4-CDP-2-C-methyl-D-erythritol 2-phosphate</name>
        <dbReference type="ChEBI" id="CHEBI:57919"/>
    </ligand>
</feature>
<feature type="site" description="Transition state stabilizer" evidence="1">
    <location>
        <position position="35"/>
    </location>
</feature>
<feature type="site" description="Transition state stabilizer" evidence="1">
    <location>
        <position position="134"/>
    </location>
</feature>
<dbReference type="EC" id="4.6.1.12" evidence="1"/>
<dbReference type="EMBL" id="BA000043">
    <property type="protein sequence ID" value="BAD74367.1"/>
    <property type="molecule type" value="Genomic_DNA"/>
</dbReference>
<dbReference type="RefSeq" id="WP_011229597.1">
    <property type="nucleotide sequence ID" value="NC_006510.1"/>
</dbReference>
<dbReference type="SMR" id="Q5L432"/>
<dbReference type="STRING" id="235909.GK0082"/>
<dbReference type="GeneID" id="32062071"/>
<dbReference type="KEGG" id="gka:GK0082"/>
<dbReference type="eggNOG" id="COG0245">
    <property type="taxonomic scope" value="Bacteria"/>
</dbReference>
<dbReference type="HOGENOM" id="CLU_084630_2_0_9"/>
<dbReference type="UniPathway" id="UPA00056">
    <property type="reaction ID" value="UER00095"/>
</dbReference>
<dbReference type="Proteomes" id="UP000001172">
    <property type="component" value="Chromosome"/>
</dbReference>
<dbReference type="GO" id="GO:0008685">
    <property type="term" value="F:2-C-methyl-D-erythritol 2,4-cyclodiphosphate synthase activity"/>
    <property type="evidence" value="ECO:0007669"/>
    <property type="project" value="UniProtKB-UniRule"/>
</dbReference>
<dbReference type="GO" id="GO:0046872">
    <property type="term" value="F:metal ion binding"/>
    <property type="evidence" value="ECO:0007669"/>
    <property type="project" value="UniProtKB-KW"/>
</dbReference>
<dbReference type="GO" id="GO:0019288">
    <property type="term" value="P:isopentenyl diphosphate biosynthetic process, methylerythritol 4-phosphate pathway"/>
    <property type="evidence" value="ECO:0007669"/>
    <property type="project" value="UniProtKB-UniRule"/>
</dbReference>
<dbReference type="GO" id="GO:0016114">
    <property type="term" value="P:terpenoid biosynthetic process"/>
    <property type="evidence" value="ECO:0007669"/>
    <property type="project" value="InterPro"/>
</dbReference>
<dbReference type="CDD" id="cd00554">
    <property type="entry name" value="MECDP_synthase"/>
    <property type="match status" value="1"/>
</dbReference>
<dbReference type="FunFam" id="3.30.1330.50:FF:000001">
    <property type="entry name" value="2-C-methyl-D-erythritol 2,4-cyclodiphosphate synthase"/>
    <property type="match status" value="1"/>
</dbReference>
<dbReference type="Gene3D" id="3.30.1330.50">
    <property type="entry name" value="2-C-methyl-D-erythritol 2,4-cyclodiphosphate synthase"/>
    <property type="match status" value="1"/>
</dbReference>
<dbReference type="HAMAP" id="MF_00107">
    <property type="entry name" value="IspF"/>
    <property type="match status" value="1"/>
</dbReference>
<dbReference type="InterPro" id="IPR003526">
    <property type="entry name" value="MECDP_synthase"/>
</dbReference>
<dbReference type="InterPro" id="IPR020555">
    <property type="entry name" value="MECDP_synthase_CS"/>
</dbReference>
<dbReference type="InterPro" id="IPR036571">
    <property type="entry name" value="MECDP_synthase_sf"/>
</dbReference>
<dbReference type="NCBIfam" id="TIGR00151">
    <property type="entry name" value="ispF"/>
    <property type="match status" value="1"/>
</dbReference>
<dbReference type="PANTHER" id="PTHR43181">
    <property type="entry name" value="2-C-METHYL-D-ERYTHRITOL 2,4-CYCLODIPHOSPHATE SYNTHASE, CHLOROPLASTIC"/>
    <property type="match status" value="1"/>
</dbReference>
<dbReference type="PANTHER" id="PTHR43181:SF1">
    <property type="entry name" value="2-C-METHYL-D-ERYTHRITOL 2,4-CYCLODIPHOSPHATE SYNTHASE, CHLOROPLASTIC"/>
    <property type="match status" value="1"/>
</dbReference>
<dbReference type="Pfam" id="PF02542">
    <property type="entry name" value="YgbB"/>
    <property type="match status" value="1"/>
</dbReference>
<dbReference type="SUPFAM" id="SSF69765">
    <property type="entry name" value="IpsF-like"/>
    <property type="match status" value="1"/>
</dbReference>
<dbReference type="PROSITE" id="PS01350">
    <property type="entry name" value="ISPF"/>
    <property type="match status" value="1"/>
</dbReference>
<protein>
    <recommendedName>
        <fullName evidence="1">2-C-methyl-D-erythritol 2,4-cyclodiphosphate synthase</fullName>
        <shortName evidence="1">MECDP-synthase</shortName>
        <shortName evidence="1">MECPP-synthase</shortName>
        <shortName evidence="1">MECPS</shortName>
        <ecNumber evidence="1">4.6.1.12</ecNumber>
    </recommendedName>
</protein>
<gene>
    <name evidence="1" type="primary">ispF</name>
    <name type="ordered locus">GK0082</name>
</gene>
<organism>
    <name type="scientific">Geobacillus kaustophilus (strain HTA426)</name>
    <dbReference type="NCBI Taxonomy" id="235909"/>
    <lineage>
        <taxon>Bacteria</taxon>
        <taxon>Bacillati</taxon>
        <taxon>Bacillota</taxon>
        <taxon>Bacilli</taxon>
        <taxon>Bacillales</taxon>
        <taxon>Anoxybacillaceae</taxon>
        <taxon>Geobacillus</taxon>
        <taxon>Geobacillus thermoleovorans group</taxon>
    </lineage>
</organism>
<name>ISPF_GEOKA</name>
<evidence type="ECO:0000255" key="1">
    <source>
        <dbReference type="HAMAP-Rule" id="MF_00107"/>
    </source>
</evidence>
<comment type="function">
    <text evidence="1">Involved in the biosynthesis of isopentenyl diphosphate (IPP) and dimethylallyl diphosphate (DMAPP), two major building blocks of isoprenoid compounds. Catalyzes the conversion of 4-diphosphocytidyl-2-C-methyl-D-erythritol 2-phosphate (CDP-ME2P) to 2-C-methyl-D-erythritol 2,4-cyclodiphosphate (ME-CPP) with a corresponding release of cytidine 5-monophosphate (CMP).</text>
</comment>
<comment type="catalytic activity">
    <reaction evidence="1">
        <text>4-CDP-2-C-methyl-D-erythritol 2-phosphate = 2-C-methyl-D-erythritol 2,4-cyclic diphosphate + CMP</text>
        <dbReference type="Rhea" id="RHEA:23864"/>
        <dbReference type="ChEBI" id="CHEBI:57919"/>
        <dbReference type="ChEBI" id="CHEBI:58483"/>
        <dbReference type="ChEBI" id="CHEBI:60377"/>
        <dbReference type="EC" id="4.6.1.12"/>
    </reaction>
</comment>
<comment type="cofactor">
    <cofactor evidence="1">
        <name>a divalent metal cation</name>
        <dbReference type="ChEBI" id="CHEBI:60240"/>
    </cofactor>
    <text evidence="1">Binds 1 divalent metal cation per subunit.</text>
</comment>
<comment type="pathway">
    <text evidence="1">Isoprenoid biosynthesis; isopentenyl diphosphate biosynthesis via DXP pathway; isopentenyl diphosphate from 1-deoxy-D-xylulose 5-phosphate: step 4/6.</text>
</comment>
<comment type="subunit">
    <text evidence="1">Homotrimer.</text>
</comment>
<comment type="similarity">
    <text evidence="1">Belongs to the IspF family.</text>
</comment>
<sequence length="158" mass="17013">MFRIGQGFDVHQLVEGRPLIIGGVTIPYEKGLLGHSDADVLLHAVADACLGAIGAGDIGRHFPDTDPRFKDADSAELLAHVWALARQEGYRLVNADCTIIAQKPKLAPYIEEMRAVIARLLEAERSQVNVKATTTEKLGFTGRGEGIAAQAVVLLQKS</sequence>
<accession>Q5L432</accession>
<keyword id="KW-0414">Isoprene biosynthesis</keyword>
<keyword id="KW-0456">Lyase</keyword>
<keyword id="KW-0479">Metal-binding</keyword>
<keyword id="KW-1185">Reference proteome</keyword>